<protein>
    <recommendedName>
        <fullName evidence="1">K(+)/H(+) antiporter NhaP2</fullName>
    </recommendedName>
    <alternativeName>
        <fullName evidence="1">Potassium/proton antiporter NhaP2</fullName>
    </alternativeName>
</protein>
<comment type="function">
    <text evidence="1">K(+)/H(+) antiporter that extrudes potassium in exchange for external protons and maintains the internal concentration of potassium under toxic levels.</text>
</comment>
<comment type="catalytic activity">
    <reaction evidence="1">
        <text>K(+)(in) + H(+)(out) = K(+)(out) + H(+)(in)</text>
        <dbReference type="Rhea" id="RHEA:29467"/>
        <dbReference type="ChEBI" id="CHEBI:15378"/>
        <dbReference type="ChEBI" id="CHEBI:29103"/>
    </reaction>
    <physiologicalReaction direction="left-to-right" evidence="1">
        <dbReference type="Rhea" id="RHEA:29468"/>
    </physiologicalReaction>
</comment>
<comment type="subcellular location">
    <subcellularLocation>
        <location evidence="1">Cell inner membrane</location>
        <topology evidence="1">Multi-pass membrane protein</topology>
    </subcellularLocation>
</comment>
<comment type="similarity">
    <text evidence="1">Belongs to the monovalent cation:proton antiporter 1 (CPA1) transporter (TC 2.A.36) family. NhaP2 subfamily.</text>
</comment>
<reference key="1">
    <citation type="journal article" date="2005" name="Nucleic Acids Res.">
        <title>The genome sequence of Salmonella enterica serovar Choleraesuis, a highly invasive and resistant zoonotic pathogen.</title>
        <authorList>
            <person name="Chiu C.-H."/>
            <person name="Tang P."/>
            <person name="Chu C."/>
            <person name="Hu S."/>
            <person name="Bao Q."/>
            <person name="Yu J."/>
            <person name="Chou Y.-Y."/>
            <person name="Wang H.-S."/>
            <person name="Lee Y.-S."/>
        </authorList>
    </citation>
    <scope>NUCLEOTIDE SEQUENCE [LARGE SCALE GENOMIC DNA]</scope>
    <source>
        <strain>SC-B67</strain>
    </source>
</reference>
<organism>
    <name type="scientific">Salmonella choleraesuis (strain SC-B67)</name>
    <dbReference type="NCBI Taxonomy" id="321314"/>
    <lineage>
        <taxon>Bacteria</taxon>
        <taxon>Pseudomonadati</taxon>
        <taxon>Pseudomonadota</taxon>
        <taxon>Gammaproteobacteria</taxon>
        <taxon>Enterobacterales</taxon>
        <taxon>Enterobacteriaceae</taxon>
        <taxon>Salmonella</taxon>
    </lineage>
</organism>
<proteinExistence type="inferred from homology"/>
<keyword id="KW-0050">Antiport</keyword>
<keyword id="KW-0997">Cell inner membrane</keyword>
<keyword id="KW-1003">Cell membrane</keyword>
<keyword id="KW-0406">Ion transport</keyword>
<keyword id="KW-0472">Membrane</keyword>
<keyword id="KW-0630">Potassium</keyword>
<keyword id="KW-0633">Potassium transport</keyword>
<keyword id="KW-0812">Transmembrane</keyword>
<keyword id="KW-1133">Transmembrane helix</keyword>
<keyword id="KW-0813">Transport</keyword>
<dbReference type="EMBL" id="AE017220">
    <property type="protein sequence ID" value="AAX65700.1"/>
    <property type="molecule type" value="Genomic_DNA"/>
</dbReference>
<dbReference type="RefSeq" id="WP_000338376.1">
    <property type="nucleotide sequence ID" value="NC_006905.1"/>
</dbReference>
<dbReference type="SMR" id="Q57NL1"/>
<dbReference type="KEGG" id="sec:SCH_1794"/>
<dbReference type="HOGENOM" id="CLU_005912_9_2_6"/>
<dbReference type="Proteomes" id="UP000000538">
    <property type="component" value="Chromosome"/>
</dbReference>
<dbReference type="GO" id="GO:0005886">
    <property type="term" value="C:plasma membrane"/>
    <property type="evidence" value="ECO:0007669"/>
    <property type="project" value="UniProtKB-SubCell"/>
</dbReference>
<dbReference type="GO" id="GO:0050660">
    <property type="term" value="F:flavin adenine dinucleotide binding"/>
    <property type="evidence" value="ECO:0007669"/>
    <property type="project" value="InterPro"/>
</dbReference>
<dbReference type="GO" id="GO:0015386">
    <property type="term" value="F:potassium:proton antiporter activity"/>
    <property type="evidence" value="ECO:0007669"/>
    <property type="project" value="UniProtKB-UniRule"/>
</dbReference>
<dbReference type="GO" id="GO:0006884">
    <property type="term" value="P:cell volume homeostasis"/>
    <property type="evidence" value="ECO:0007669"/>
    <property type="project" value="InterPro"/>
</dbReference>
<dbReference type="FunFam" id="1.20.1530.20:FF:000002">
    <property type="entry name" value="K(+)/H(+) antiporter NhaP2"/>
    <property type="match status" value="1"/>
</dbReference>
<dbReference type="Gene3D" id="1.20.1530.20">
    <property type="match status" value="1"/>
</dbReference>
<dbReference type="Gene3D" id="3.30.465.10">
    <property type="match status" value="1"/>
</dbReference>
<dbReference type="Gene3D" id="3.30.70.1450">
    <property type="entry name" value="Regulator of K+ conductance, C-terminal domain"/>
    <property type="match status" value="1"/>
</dbReference>
<dbReference type="HAMAP" id="MF_01075">
    <property type="entry name" value="NhaP2"/>
    <property type="match status" value="1"/>
</dbReference>
<dbReference type="InterPro" id="IPR006153">
    <property type="entry name" value="Cation/H_exchanger_TM"/>
</dbReference>
<dbReference type="InterPro" id="IPR036318">
    <property type="entry name" value="FAD-bd_PCMH-like_sf"/>
</dbReference>
<dbReference type="InterPro" id="IPR016169">
    <property type="entry name" value="FAD-bd_PCMH_sub2"/>
</dbReference>
<dbReference type="InterPro" id="IPR038770">
    <property type="entry name" value="Na+/solute_symporter_sf"/>
</dbReference>
<dbReference type="InterPro" id="IPR023729">
    <property type="entry name" value="NhaP2"/>
</dbReference>
<dbReference type="InterPro" id="IPR006037">
    <property type="entry name" value="RCK_C"/>
</dbReference>
<dbReference type="InterPro" id="IPR036721">
    <property type="entry name" value="RCK_C_sf"/>
</dbReference>
<dbReference type="InterPro" id="IPR005170">
    <property type="entry name" value="Transptr-assoc_dom"/>
</dbReference>
<dbReference type="NCBIfam" id="NF003714">
    <property type="entry name" value="PRK05326.1-1"/>
    <property type="match status" value="1"/>
</dbReference>
<dbReference type="NCBIfam" id="NF003715">
    <property type="entry name" value="PRK05326.1-2"/>
    <property type="match status" value="1"/>
</dbReference>
<dbReference type="NCBIfam" id="NF003716">
    <property type="entry name" value="PRK05326.1-3"/>
    <property type="match status" value="1"/>
</dbReference>
<dbReference type="PANTHER" id="PTHR32507:SF7">
    <property type="entry name" value="K(+)_H(+) ANTIPORTER NHAP2"/>
    <property type="match status" value="1"/>
</dbReference>
<dbReference type="PANTHER" id="PTHR32507">
    <property type="entry name" value="NA(+)/H(+) ANTIPORTER 1"/>
    <property type="match status" value="1"/>
</dbReference>
<dbReference type="Pfam" id="PF03471">
    <property type="entry name" value="CorC_HlyC"/>
    <property type="match status" value="1"/>
</dbReference>
<dbReference type="Pfam" id="PF00999">
    <property type="entry name" value="Na_H_Exchanger"/>
    <property type="match status" value="1"/>
</dbReference>
<dbReference type="Pfam" id="PF02080">
    <property type="entry name" value="TrkA_C"/>
    <property type="match status" value="1"/>
</dbReference>
<dbReference type="SMART" id="SM01091">
    <property type="entry name" value="CorC_HlyC"/>
    <property type="match status" value="1"/>
</dbReference>
<dbReference type="SUPFAM" id="SSF56176">
    <property type="entry name" value="FAD-binding/transporter-associated domain-like"/>
    <property type="match status" value="1"/>
</dbReference>
<dbReference type="SUPFAM" id="SSF116726">
    <property type="entry name" value="TrkA C-terminal domain-like"/>
    <property type="match status" value="1"/>
</dbReference>
<dbReference type="PROSITE" id="PS51202">
    <property type="entry name" value="RCK_C"/>
    <property type="match status" value="1"/>
</dbReference>
<gene>
    <name evidence="1" type="primary">nhaP2</name>
    <name type="synonym">cvrA</name>
    <name type="ordered locus">SCH_1794</name>
</gene>
<feature type="chain" id="PRO_0000052384" description="K(+)/H(+) antiporter NhaP2">
    <location>
        <begin position="1"/>
        <end position="577"/>
    </location>
</feature>
<feature type="transmembrane region" description="Helical" evidence="1">
    <location>
        <begin position="3"/>
        <end position="23"/>
    </location>
</feature>
<feature type="transmembrane region" description="Helical" evidence="1">
    <location>
        <begin position="30"/>
        <end position="50"/>
    </location>
</feature>
<feature type="transmembrane region" description="Helical" evidence="1">
    <location>
        <begin position="58"/>
        <end position="78"/>
    </location>
</feature>
<feature type="transmembrane region" description="Helical" evidence="1">
    <location>
        <begin position="87"/>
        <end position="107"/>
    </location>
</feature>
<feature type="transmembrane region" description="Helical" evidence="1">
    <location>
        <begin position="109"/>
        <end position="129"/>
    </location>
</feature>
<feature type="transmembrane region" description="Helical" evidence="1">
    <location>
        <begin position="185"/>
        <end position="205"/>
    </location>
</feature>
<feature type="transmembrane region" description="Helical" evidence="1">
    <location>
        <begin position="221"/>
        <end position="241"/>
    </location>
</feature>
<feature type="transmembrane region" description="Helical" evidence="1">
    <location>
        <begin position="271"/>
        <end position="291"/>
    </location>
</feature>
<feature type="transmembrane region" description="Helical" evidence="1">
    <location>
        <begin position="293"/>
        <end position="313"/>
    </location>
</feature>
<feature type="transmembrane region" description="Helical" evidence="1">
    <location>
        <begin position="334"/>
        <end position="354"/>
    </location>
</feature>
<feature type="transmembrane region" description="Helical" evidence="1">
    <location>
        <begin position="363"/>
        <end position="383"/>
    </location>
</feature>
<feature type="domain" description="RCK C-terminal" evidence="1">
    <location>
        <begin position="403"/>
        <end position="485"/>
    </location>
</feature>
<accession>Q57NL1</accession>
<name>NHAP2_SALCH</name>
<evidence type="ECO:0000255" key="1">
    <source>
        <dbReference type="HAMAP-Rule" id="MF_01075"/>
    </source>
</evidence>
<sequence length="577" mass="62469">MDAATIISLFILGSILVTSSILLSSFSSRLGIPILVIFLAIGMLAGVDGIGGIPFDNYPFAYMVSNLALAIILLDGGMRTQASSFRVALGPALSLATLGVLITSGLTGMMAAWLFHLDLIEGLLIGAIVGSTDAAAVFSLLGGKGLNERVGSTLEIESGSNDPMAVFLTITLIEMIQKHETGLDWMFAVHIIQQFGLGIVFGLGGGYLLQQMINRISLPSGLYPMLALSGGILIFALTTALEGSGILAVYLCGFLLGNRPIRNRYGILQNFDGLAWLAQIAMFLVLGLLVTPSDLWPIAVPALILSIWMIFFARPLSVFTGLLPFRGFNLRERIFISWVGLRGAVPIILAVFPMMAGLENARLFFNVAFFVVLVSLLLQGTSLSWAAKRAKVVVPPVGWPVSRVGLDIHPDNPWEQFIYQLSADKWCVGAALRDLHMPNETRIAALFRNNELFHPTGSTRLQEGDVLCVIGRERDLPALGKLFSQSPPVSLDQRFFGDFILEANAKFADVALIYGLEEGTEYRDKQQTLGEIIQQLLGAAPVVGDQVEFGGMIWTVAEKEDNVVRKIGVRVAEDEAE</sequence>